<keyword id="KW-0067">ATP-binding</keyword>
<keyword id="KW-0143">Chaperone</keyword>
<keyword id="KW-0547">Nucleotide-binding</keyword>
<keyword id="KW-0597">Phosphoprotein</keyword>
<keyword id="KW-0346">Stress response</keyword>
<organism>
    <name type="scientific">Salmonella enteritidis PT4 (strain P125109)</name>
    <dbReference type="NCBI Taxonomy" id="550537"/>
    <lineage>
        <taxon>Bacteria</taxon>
        <taxon>Pseudomonadati</taxon>
        <taxon>Pseudomonadota</taxon>
        <taxon>Gammaproteobacteria</taxon>
        <taxon>Enterobacterales</taxon>
        <taxon>Enterobacteriaceae</taxon>
        <taxon>Salmonella</taxon>
    </lineage>
</organism>
<accession>B5R5I2</accession>
<gene>
    <name evidence="1" type="primary">dnaK</name>
    <name type="ordered locus">SEN0011</name>
</gene>
<dbReference type="EMBL" id="AM933172">
    <property type="protein sequence ID" value="CAR31602.1"/>
    <property type="molecule type" value="Genomic_DNA"/>
</dbReference>
<dbReference type="RefSeq" id="WP_000516128.1">
    <property type="nucleotide sequence ID" value="NC_011294.1"/>
</dbReference>
<dbReference type="SMR" id="B5R5I2"/>
<dbReference type="KEGG" id="set:SEN0011"/>
<dbReference type="HOGENOM" id="CLU_005965_2_1_6"/>
<dbReference type="Proteomes" id="UP000000613">
    <property type="component" value="Chromosome"/>
</dbReference>
<dbReference type="GO" id="GO:0005524">
    <property type="term" value="F:ATP binding"/>
    <property type="evidence" value="ECO:0007669"/>
    <property type="project" value="UniProtKB-UniRule"/>
</dbReference>
<dbReference type="GO" id="GO:0140662">
    <property type="term" value="F:ATP-dependent protein folding chaperone"/>
    <property type="evidence" value="ECO:0007669"/>
    <property type="project" value="InterPro"/>
</dbReference>
<dbReference type="GO" id="GO:0051082">
    <property type="term" value="F:unfolded protein binding"/>
    <property type="evidence" value="ECO:0007669"/>
    <property type="project" value="InterPro"/>
</dbReference>
<dbReference type="CDD" id="cd10234">
    <property type="entry name" value="ASKHA_NBD_HSP70_DnaK-like"/>
    <property type="match status" value="1"/>
</dbReference>
<dbReference type="FunFam" id="2.60.34.10:FF:000014">
    <property type="entry name" value="Chaperone protein DnaK HSP70"/>
    <property type="match status" value="1"/>
</dbReference>
<dbReference type="FunFam" id="3.30.30.30:FF:000003">
    <property type="entry name" value="Heat shock protein 9"/>
    <property type="match status" value="1"/>
</dbReference>
<dbReference type="FunFam" id="1.20.1270.10:FF:000001">
    <property type="entry name" value="Molecular chaperone DnaK"/>
    <property type="match status" value="1"/>
</dbReference>
<dbReference type="FunFam" id="3.30.420.40:FF:000004">
    <property type="entry name" value="Molecular chaperone DnaK"/>
    <property type="match status" value="1"/>
</dbReference>
<dbReference type="FunFam" id="3.90.640.10:FF:000003">
    <property type="entry name" value="Molecular chaperone DnaK"/>
    <property type="match status" value="1"/>
</dbReference>
<dbReference type="Gene3D" id="1.20.1270.10">
    <property type="match status" value="1"/>
</dbReference>
<dbReference type="Gene3D" id="3.30.420.40">
    <property type="match status" value="2"/>
</dbReference>
<dbReference type="Gene3D" id="3.90.640.10">
    <property type="entry name" value="Actin, Chain A, domain 4"/>
    <property type="match status" value="1"/>
</dbReference>
<dbReference type="Gene3D" id="2.60.34.10">
    <property type="entry name" value="Substrate Binding Domain Of DNAk, Chain A, domain 1"/>
    <property type="match status" value="1"/>
</dbReference>
<dbReference type="HAMAP" id="MF_00332">
    <property type="entry name" value="DnaK"/>
    <property type="match status" value="1"/>
</dbReference>
<dbReference type="InterPro" id="IPR043129">
    <property type="entry name" value="ATPase_NBD"/>
</dbReference>
<dbReference type="InterPro" id="IPR012725">
    <property type="entry name" value="Chaperone_DnaK"/>
</dbReference>
<dbReference type="InterPro" id="IPR018181">
    <property type="entry name" value="Heat_shock_70_CS"/>
</dbReference>
<dbReference type="InterPro" id="IPR029048">
    <property type="entry name" value="HSP70_C_sf"/>
</dbReference>
<dbReference type="InterPro" id="IPR029047">
    <property type="entry name" value="HSP70_peptide-bd_sf"/>
</dbReference>
<dbReference type="InterPro" id="IPR013126">
    <property type="entry name" value="Hsp_70_fam"/>
</dbReference>
<dbReference type="NCBIfam" id="NF001413">
    <property type="entry name" value="PRK00290.1"/>
    <property type="match status" value="1"/>
</dbReference>
<dbReference type="NCBIfam" id="NF003520">
    <property type="entry name" value="PRK05183.1"/>
    <property type="match status" value="1"/>
</dbReference>
<dbReference type="NCBIfam" id="TIGR02350">
    <property type="entry name" value="prok_dnaK"/>
    <property type="match status" value="1"/>
</dbReference>
<dbReference type="PANTHER" id="PTHR19375">
    <property type="entry name" value="HEAT SHOCK PROTEIN 70KDA"/>
    <property type="match status" value="1"/>
</dbReference>
<dbReference type="Pfam" id="PF00012">
    <property type="entry name" value="HSP70"/>
    <property type="match status" value="1"/>
</dbReference>
<dbReference type="PRINTS" id="PR00301">
    <property type="entry name" value="HEATSHOCK70"/>
</dbReference>
<dbReference type="SUPFAM" id="SSF53067">
    <property type="entry name" value="Actin-like ATPase domain"/>
    <property type="match status" value="2"/>
</dbReference>
<dbReference type="SUPFAM" id="SSF100934">
    <property type="entry name" value="Heat shock protein 70kD (HSP70), C-terminal subdomain"/>
    <property type="match status" value="1"/>
</dbReference>
<dbReference type="SUPFAM" id="SSF100920">
    <property type="entry name" value="Heat shock protein 70kD (HSP70), peptide-binding domain"/>
    <property type="match status" value="1"/>
</dbReference>
<dbReference type="PROSITE" id="PS00297">
    <property type="entry name" value="HSP70_1"/>
    <property type="match status" value="1"/>
</dbReference>
<dbReference type="PROSITE" id="PS00329">
    <property type="entry name" value="HSP70_2"/>
    <property type="match status" value="1"/>
</dbReference>
<dbReference type="PROSITE" id="PS01036">
    <property type="entry name" value="HSP70_3"/>
    <property type="match status" value="1"/>
</dbReference>
<feature type="chain" id="PRO_1000119751" description="Chaperone protein DnaK">
    <location>
        <begin position="1"/>
        <end position="638"/>
    </location>
</feature>
<feature type="region of interest" description="Disordered" evidence="2">
    <location>
        <begin position="603"/>
        <end position="638"/>
    </location>
</feature>
<feature type="compositionally biased region" description="Low complexity" evidence="2">
    <location>
        <begin position="603"/>
        <end position="620"/>
    </location>
</feature>
<feature type="modified residue" description="Phosphothreonine; by autocatalysis" evidence="1">
    <location>
        <position position="199"/>
    </location>
</feature>
<evidence type="ECO:0000255" key="1">
    <source>
        <dbReference type="HAMAP-Rule" id="MF_00332"/>
    </source>
</evidence>
<evidence type="ECO:0000256" key="2">
    <source>
        <dbReference type="SAM" id="MobiDB-lite"/>
    </source>
</evidence>
<protein>
    <recommendedName>
        <fullName evidence="1">Chaperone protein DnaK</fullName>
    </recommendedName>
    <alternativeName>
        <fullName evidence="1">HSP70</fullName>
    </alternativeName>
    <alternativeName>
        <fullName evidence="1">Heat shock 70 kDa protein</fullName>
    </alternativeName>
    <alternativeName>
        <fullName evidence="1">Heat shock protein 70</fullName>
    </alternativeName>
</protein>
<proteinExistence type="inferred from homology"/>
<reference key="1">
    <citation type="journal article" date="2008" name="Genome Res.">
        <title>Comparative genome analysis of Salmonella enteritidis PT4 and Salmonella gallinarum 287/91 provides insights into evolutionary and host adaptation pathways.</title>
        <authorList>
            <person name="Thomson N.R."/>
            <person name="Clayton D.J."/>
            <person name="Windhorst D."/>
            <person name="Vernikos G."/>
            <person name="Davidson S."/>
            <person name="Churcher C."/>
            <person name="Quail M.A."/>
            <person name="Stevens M."/>
            <person name="Jones M.A."/>
            <person name="Watson M."/>
            <person name="Barron A."/>
            <person name="Layton A."/>
            <person name="Pickard D."/>
            <person name="Kingsley R.A."/>
            <person name="Bignell A."/>
            <person name="Clark L."/>
            <person name="Harris B."/>
            <person name="Ormond D."/>
            <person name="Abdellah Z."/>
            <person name="Brooks K."/>
            <person name="Cherevach I."/>
            <person name="Chillingworth T."/>
            <person name="Woodward J."/>
            <person name="Norberczak H."/>
            <person name="Lord A."/>
            <person name="Arrowsmith C."/>
            <person name="Jagels K."/>
            <person name="Moule S."/>
            <person name="Mungall K."/>
            <person name="Saunders M."/>
            <person name="Whitehead S."/>
            <person name="Chabalgoity J.A."/>
            <person name="Maskell D."/>
            <person name="Humphreys T."/>
            <person name="Roberts M."/>
            <person name="Barrow P.A."/>
            <person name="Dougan G."/>
            <person name="Parkhill J."/>
        </authorList>
    </citation>
    <scope>NUCLEOTIDE SEQUENCE [LARGE SCALE GENOMIC DNA]</scope>
    <source>
        <strain>P125109</strain>
    </source>
</reference>
<sequence length="638" mass="69286">MGKIIGIDLGTTNSCVAIMDGTQARVLENAEGDRTTPSIIAYTQDGETLVGQPAKRQAVTNPQNTLFAIKRLIGRRFQDEEVQRDVSIMPYKIIGADNGDAWLDVKGQKMAPPQISAEVLKKMKKTAEDYLGEPVTEAVITVPAYFNDAQRQATKDAGRIAGLEVKRIINEPTAAALAYGLDKEVGNRTIAVYDLGGGTFDISIIEIDEVDGEKTFEVLATNGDTHLGGEDFDTRLINYLVDEFKKDQGIDLRNDPLAMQRLKEAAEKAKIELSSAQQTDVNLPYITADATGPKHMNIKVTRAKLESLVEDLVNRSIEPLKVALQDAGLSVSDINDVILVGGQTRMPMVQKKVAEFFGKEPRKDVNPDEAVAIGAAVQGGVLTGDVKDVLLLDVTPLSLGIETMGGVMTPLITKNTTIPTKHSQVFSTAEDNQSAVTIHVLQGERKRASDNKSLGQFNLDGINPAPRGMPQIEVTFDIDADGILHVSAKDKNSGKEQKITIKASSGLNEEEIQKMVRDAEANAESDRKFEELVQTRNQGDHLLHSTRKQVEEAGDKLPVDDKTAIESALNALETALKGEDKAAIEAKMQELAQVSQKLMEIAQQQHAQQQAGSADASANNAKDDDVVDAEFEEVKDKK</sequence>
<comment type="function">
    <text evidence="1">Acts as a chaperone.</text>
</comment>
<comment type="induction">
    <text evidence="1">By stress conditions e.g. heat shock.</text>
</comment>
<comment type="similarity">
    <text evidence="1">Belongs to the heat shock protein 70 family.</text>
</comment>
<name>DNAK_SALEP</name>